<reference key="1">
    <citation type="journal article" date="2001" name="Plant Mol. Biol.">
        <title>The plastid chromosome of spinach (Spinacia oleracea): complete nucleotide sequence and gene organization.</title>
        <authorList>
            <person name="Schmitz-Linneweber C."/>
            <person name="Maier R.M."/>
            <person name="Alcaraz J.-P."/>
            <person name="Cottet A."/>
            <person name="Herrmann R.G."/>
            <person name="Mache R."/>
        </authorList>
    </citation>
    <scope>NUCLEOTIDE SEQUENCE [LARGE SCALE GENOMIC DNA]</scope>
    <source>
        <strain>cv. Geant d'hiver</strain>
        <strain>cv. Monatol</strain>
    </source>
</reference>
<sequence length="742" mass="84530">MEHIYQYAWIIPFLPLPVPLLIGAGLLFFPTATKNLRRIWAFSSISLLSIVMIFSMKLAIQQINSNSIYQYLWSWTINNDFSLEFGYLMDPLTSIMSMLITTVAILVLIYSDNYMSHDQGYLRFFAYMSFFNTSMLGLVTSSNLIQIYIFWELVGMCSYLLIGFWFTRPIAANACQKAFVTNRVGDFGLLLGILGLYWITGSFEFRDLFEIFNNLIKNNEVNSLFCILCAFLLFAGAVAKSAQFPLHVWLPDAMEGPTPISALIHAATMVAAGIFLVARLLPLFVVIPYIMYVISFIGIITVLLGATLALAQKDIKRSLAYYTMSQLGYMMLALGMGSYRTALFHLITHAYSKALLFLASGSLIHSMGTIVGYSPDKSQNMVLMGGLTKHVPITKTSFLIGTLSLCGIPPLACFWSKDEILNDSWVYSPIFAIIAYFTAGLTAFYMFRIYLLTFEGHLNFFCKNYSGKKSSSFYSISLWGKKELKTINQKISLLNLLTMNNKERASFFSKKPYEINVKLTKLLRSFITITYFENKNISLYPYESDNTMLFPLIILIMFTLFVGFIGIPFNQEGMDLDILTKWLTPSINLLHSNSENFVDWYEFVINAIFSISIAFFGIFIAFFFYKPIYSSLKNFDLINSFDKRGQKRILGDNIITIIYNWSANRGYIDAFYSTFLIKGIRSLSELVSFFDRRIIDGIPNGFGVTSFFVGEGIKYVGGGRISSYLFWYLLYVSIFLFIFTFT</sequence>
<feature type="chain" id="PRO_0000118204" description="NAD(P)H-quinone oxidoreductase subunit 5, chloroplastic">
    <location>
        <begin position="1"/>
        <end position="742"/>
    </location>
</feature>
<feature type="transmembrane region" description="Helical" evidence="2">
    <location>
        <begin position="9"/>
        <end position="29"/>
    </location>
</feature>
<feature type="transmembrane region" description="Helical" evidence="2">
    <location>
        <begin position="39"/>
        <end position="59"/>
    </location>
</feature>
<feature type="transmembrane region" description="Helical" evidence="2">
    <location>
        <begin position="91"/>
        <end position="111"/>
    </location>
</feature>
<feature type="transmembrane region" description="Helical" evidence="2">
    <location>
        <begin position="125"/>
        <end position="145"/>
    </location>
</feature>
<feature type="transmembrane region" description="Helical" evidence="2">
    <location>
        <begin position="147"/>
        <end position="167"/>
    </location>
</feature>
<feature type="transmembrane region" description="Helical" evidence="2">
    <location>
        <begin position="185"/>
        <end position="205"/>
    </location>
</feature>
<feature type="transmembrane region" description="Helical" evidence="2">
    <location>
        <begin position="224"/>
        <end position="244"/>
    </location>
</feature>
<feature type="transmembrane region" description="Helical" evidence="2">
    <location>
        <begin position="258"/>
        <end position="278"/>
    </location>
</feature>
<feature type="transmembrane region" description="Helical" evidence="2">
    <location>
        <begin position="280"/>
        <end position="300"/>
    </location>
</feature>
<feature type="transmembrane region" description="Helical" evidence="2">
    <location>
        <begin position="327"/>
        <end position="347"/>
    </location>
</feature>
<feature type="transmembrane region" description="Helical" evidence="2">
    <location>
        <begin position="354"/>
        <end position="374"/>
    </location>
</feature>
<feature type="transmembrane region" description="Helical" evidence="2">
    <location>
        <begin position="396"/>
        <end position="416"/>
    </location>
</feature>
<feature type="transmembrane region" description="Helical" evidence="2">
    <location>
        <begin position="425"/>
        <end position="445"/>
    </location>
</feature>
<feature type="transmembrane region" description="Helical" evidence="2">
    <location>
        <begin position="549"/>
        <end position="569"/>
    </location>
</feature>
<feature type="transmembrane region" description="Helical" evidence="2">
    <location>
        <begin position="603"/>
        <end position="623"/>
    </location>
</feature>
<feature type="transmembrane region" description="Helical" evidence="2">
    <location>
        <begin position="721"/>
        <end position="741"/>
    </location>
</feature>
<dbReference type="EC" id="7.1.1.-"/>
<dbReference type="EMBL" id="AJ400848">
    <property type="protein sequence ID" value="CAB88780.1"/>
    <property type="molecule type" value="Genomic_DNA"/>
</dbReference>
<dbReference type="RefSeq" id="NP_054984.1">
    <property type="nucleotide sequence ID" value="NC_002202.1"/>
</dbReference>
<dbReference type="PDB" id="9GRX">
    <property type="method" value="EM"/>
    <property type="resolution" value="3.19 A"/>
    <property type="chains" value="F=1-742"/>
</dbReference>
<dbReference type="PDBsum" id="9GRX"/>
<dbReference type="EMDB" id="EMD-51527"/>
<dbReference type="SMR" id="Q9M3J4"/>
<dbReference type="FunCoup" id="Q9M3J4">
    <property type="interactions" value="6"/>
</dbReference>
<dbReference type="STRING" id="3562.Q9M3J4"/>
<dbReference type="GeneID" id="2715591"/>
<dbReference type="KEGG" id="soe:2715591"/>
<dbReference type="InParanoid" id="Q9M3J4"/>
<dbReference type="OrthoDB" id="543408at2759"/>
<dbReference type="Proteomes" id="UP001155700">
    <property type="component" value="Chloroplast Pltd"/>
</dbReference>
<dbReference type="GO" id="GO:0009535">
    <property type="term" value="C:chloroplast thylakoid membrane"/>
    <property type="evidence" value="ECO:0007669"/>
    <property type="project" value="UniProtKB-SubCell"/>
</dbReference>
<dbReference type="GO" id="GO:0008137">
    <property type="term" value="F:NADH dehydrogenase (ubiquinone) activity"/>
    <property type="evidence" value="ECO:0007669"/>
    <property type="project" value="InterPro"/>
</dbReference>
<dbReference type="GO" id="GO:0048038">
    <property type="term" value="F:quinone binding"/>
    <property type="evidence" value="ECO:0007669"/>
    <property type="project" value="UniProtKB-KW"/>
</dbReference>
<dbReference type="GO" id="GO:0042773">
    <property type="term" value="P:ATP synthesis coupled electron transport"/>
    <property type="evidence" value="ECO:0007669"/>
    <property type="project" value="InterPro"/>
</dbReference>
<dbReference type="GO" id="GO:0015990">
    <property type="term" value="P:electron transport coupled proton transport"/>
    <property type="evidence" value="ECO:0000318"/>
    <property type="project" value="GO_Central"/>
</dbReference>
<dbReference type="Gene3D" id="1.20.5.2700">
    <property type="match status" value="1"/>
</dbReference>
<dbReference type="InterPro" id="IPR002128">
    <property type="entry name" value="NADH_UbQ_OxRdtase_chlpt_su5_C"/>
</dbReference>
<dbReference type="InterPro" id="IPR018393">
    <property type="entry name" value="NADHpl_OxRdtase_5_subgr"/>
</dbReference>
<dbReference type="InterPro" id="IPR001750">
    <property type="entry name" value="ND/Mrp_TM"/>
</dbReference>
<dbReference type="InterPro" id="IPR003945">
    <property type="entry name" value="NU5C-like"/>
</dbReference>
<dbReference type="InterPro" id="IPR001516">
    <property type="entry name" value="Proton_antipo_N"/>
</dbReference>
<dbReference type="NCBIfam" id="TIGR01974">
    <property type="entry name" value="NDH_I_L"/>
    <property type="match status" value="1"/>
</dbReference>
<dbReference type="NCBIfam" id="NF005141">
    <property type="entry name" value="PRK06590.1"/>
    <property type="match status" value="1"/>
</dbReference>
<dbReference type="PANTHER" id="PTHR42829">
    <property type="entry name" value="NADH-UBIQUINONE OXIDOREDUCTASE CHAIN 5"/>
    <property type="match status" value="1"/>
</dbReference>
<dbReference type="PANTHER" id="PTHR42829:SF2">
    <property type="entry name" value="NADH-UBIQUINONE OXIDOREDUCTASE CHAIN 5"/>
    <property type="match status" value="1"/>
</dbReference>
<dbReference type="Pfam" id="PF01010">
    <property type="entry name" value="Proton_antipo_C"/>
    <property type="match status" value="1"/>
</dbReference>
<dbReference type="Pfam" id="PF00361">
    <property type="entry name" value="Proton_antipo_M"/>
    <property type="match status" value="1"/>
</dbReference>
<dbReference type="Pfam" id="PF00662">
    <property type="entry name" value="Proton_antipo_N"/>
    <property type="match status" value="1"/>
</dbReference>
<dbReference type="PRINTS" id="PR01434">
    <property type="entry name" value="NADHDHGNASE5"/>
</dbReference>
<dbReference type="PRINTS" id="PR01435">
    <property type="entry name" value="NPOXDRDTASE5"/>
</dbReference>
<keyword id="KW-0002">3D-structure</keyword>
<keyword id="KW-0150">Chloroplast</keyword>
<keyword id="KW-0472">Membrane</keyword>
<keyword id="KW-0520">NAD</keyword>
<keyword id="KW-0521">NADP</keyword>
<keyword id="KW-0934">Plastid</keyword>
<keyword id="KW-0618">Plastoquinone</keyword>
<keyword id="KW-0874">Quinone</keyword>
<keyword id="KW-1185">Reference proteome</keyword>
<keyword id="KW-0793">Thylakoid</keyword>
<keyword id="KW-1278">Translocase</keyword>
<keyword id="KW-0812">Transmembrane</keyword>
<keyword id="KW-1133">Transmembrane helix</keyword>
<keyword id="KW-0813">Transport</keyword>
<protein>
    <recommendedName>
        <fullName>NAD(P)H-quinone oxidoreductase subunit 5, chloroplastic</fullName>
        <ecNumber>7.1.1.-</ecNumber>
    </recommendedName>
    <alternativeName>
        <fullName>NAD(P)H dehydrogenase subunit 5</fullName>
    </alternativeName>
    <alternativeName>
        <fullName>NADH-plastoquinone oxidoreductase subunit 5</fullName>
    </alternativeName>
</protein>
<organism>
    <name type="scientific">Spinacia oleracea</name>
    <name type="common">Spinach</name>
    <dbReference type="NCBI Taxonomy" id="3562"/>
    <lineage>
        <taxon>Eukaryota</taxon>
        <taxon>Viridiplantae</taxon>
        <taxon>Streptophyta</taxon>
        <taxon>Embryophyta</taxon>
        <taxon>Tracheophyta</taxon>
        <taxon>Spermatophyta</taxon>
        <taxon>Magnoliopsida</taxon>
        <taxon>eudicotyledons</taxon>
        <taxon>Gunneridae</taxon>
        <taxon>Pentapetalae</taxon>
        <taxon>Caryophyllales</taxon>
        <taxon>Chenopodiaceae</taxon>
        <taxon>Chenopodioideae</taxon>
        <taxon>Anserineae</taxon>
        <taxon>Spinacia</taxon>
    </lineage>
</organism>
<evidence type="ECO:0000250" key="1"/>
<evidence type="ECO:0000255" key="2"/>
<evidence type="ECO:0000305" key="3"/>
<geneLocation type="chloroplast"/>
<comment type="function">
    <text evidence="1">NDH shuttles electrons from NAD(P)H:plastoquinone, via FMN and iron-sulfur (Fe-S) centers, to quinones in the photosynthetic chain and possibly in a chloroplast respiratory chain. The immediate electron acceptor for the enzyme in this species is believed to be plastoquinone. Couples the redox reaction to proton translocation, and thus conserves the redox energy in a proton gradient (By similarity).</text>
</comment>
<comment type="catalytic activity">
    <reaction>
        <text>a plastoquinone + NADH + (n+1) H(+)(in) = a plastoquinol + NAD(+) + n H(+)(out)</text>
        <dbReference type="Rhea" id="RHEA:42608"/>
        <dbReference type="Rhea" id="RHEA-COMP:9561"/>
        <dbReference type="Rhea" id="RHEA-COMP:9562"/>
        <dbReference type="ChEBI" id="CHEBI:15378"/>
        <dbReference type="ChEBI" id="CHEBI:17757"/>
        <dbReference type="ChEBI" id="CHEBI:57540"/>
        <dbReference type="ChEBI" id="CHEBI:57945"/>
        <dbReference type="ChEBI" id="CHEBI:62192"/>
    </reaction>
</comment>
<comment type="catalytic activity">
    <reaction>
        <text>a plastoquinone + NADPH + (n+1) H(+)(in) = a plastoquinol + NADP(+) + n H(+)(out)</text>
        <dbReference type="Rhea" id="RHEA:42612"/>
        <dbReference type="Rhea" id="RHEA-COMP:9561"/>
        <dbReference type="Rhea" id="RHEA-COMP:9562"/>
        <dbReference type="ChEBI" id="CHEBI:15378"/>
        <dbReference type="ChEBI" id="CHEBI:17757"/>
        <dbReference type="ChEBI" id="CHEBI:57783"/>
        <dbReference type="ChEBI" id="CHEBI:58349"/>
        <dbReference type="ChEBI" id="CHEBI:62192"/>
    </reaction>
</comment>
<comment type="subunit">
    <text evidence="1">NDH is composed of at least 16 different subunits, 5 of which are encoded in the nucleus.</text>
</comment>
<comment type="subcellular location">
    <subcellularLocation>
        <location evidence="1">Plastid</location>
        <location evidence="1">Chloroplast thylakoid membrane</location>
        <topology evidence="1">Multi-pass membrane protein</topology>
    </subcellularLocation>
</comment>
<comment type="similarity">
    <text evidence="3">Belongs to the complex I subunit 5 family.</text>
</comment>
<gene>
    <name type="primary">ndhF</name>
</gene>
<accession>Q9M3J4</accession>
<proteinExistence type="evidence at protein level"/>
<name>NU5C_SPIOL</name>